<protein>
    <recommendedName>
        <fullName evidence="1">Large ribosomal subunit protein uL24</fullName>
    </recommendedName>
    <alternativeName>
        <fullName evidence="2">50S ribosomal protein L24</fullName>
    </alternativeName>
</protein>
<name>RL24_HERAR</name>
<keyword id="KW-1185">Reference proteome</keyword>
<keyword id="KW-0687">Ribonucleoprotein</keyword>
<keyword id="KW-0689">Ribosomal protein</keyword>
<keyword id="KW-0694">RNA-binding</keyword>
<keyword id="KW-0699">rRNA-binding</keyword>
<feature type="chain" id="PRO_1000052226" description="Large ribosomal subunit protein uL24">
    <location>
        <begin position="1"/>
        <end position="104"/>
    </location>
</feature>
<comment type="function">
    <text evidence="1">One of two assembly initiator proteins, it binds directly to the 5'-end of the 23S rRNA, where it nucleates assembly of the 50S subunit.</text>
</comment>
<comment type="function">
    <text evidence="1">One of the proteins that surrounds the polypeptide exit tunnel on the outside of the subunit.</text>
</comment>
<comment type="subunit">
    <text evidence="1">Part of the 50S ribosomal subunit.</text>
</comment>
<comment type="similarity">
    <text evidence="1">Belongs to the universal ribosomal protein uL24 family.</text>
</comment>
<dbReference type="EMBL" id="CU207211">
    <property type="protein sequence ID" value="CAL63264.1"/>
    <property type="molecule type" value="Genomic_DNA"/>
</dbReference>
<dbReference type="SMR" id="A4G9S7"/>
<dbReference type="STRING" id="204773.HEAR3155"/>
<dbReference type="KEGG" id="har:HEAR3155"/>
<dbReference type="eggNOG" id="COG0198">
    <property type="taxonomic scope" value="Bacteria"/>
</dbReference>
<dbReference type="HOGENOM" id="CLU_093315_2_2_4"/>
<dbReference type="OrthoDB" id="9807419at2"/>
<dbReference type="Proteomes" id="UP000006697">
    <property type="component" value="Chromosome"/>
</dbReference>
<dbReference type="GO" id="GO:1990904">
    <property type="term" value="C:ribonucleoprotein complex"/>
    <property type="evidence" value="ECO:0007669"/>
    <property type="project" value="UniProtKB-KW"/>
</dbReference>
<dbReference type="GO" id="GO:0005840">
    <property type="term" value="C:ribosome"/>
    <property type="evidence" value="ECO:0007669"/>
    <property type="project" value="UniProtKB-KW"/>
</dbReference>
<dbReference type="GO" id="GO:0019843">
    <property type="term" value="F:rRNA binding"/>
    <property type="evidence" value="ECO:0007669"/>
    <property type="project" value="UniProtKB-UniRule"/>
</dbReference>
<dbReference type="GO" id="GO:0003735">
    <property type="term" value="F:structural constituent of ribosome"/>
    <property type="evidence" value="ECO:0007669"/>
    <property type="project" value="InterPro"/>
</dbReference>
<dbReference type="GO" id="GO:0006412">
    <property type="term" value="P:translation"/>
    <property type="evidence" value="ECO:0007669"/>
    <property type="project" value="UniProtKB-UniRule"/>
</dbReference>
<dbReference type="CDD" id="cd06089">
    <property type="entry name" value="KOW_RPL26"/>
    <property type="match status" value="1"/>
</dbReference>
<dbReference type="Gene3D" id="2.30.30.30">
    <property type="match status" value="1"/>
</dbReference>
<dbReference type="HAMAP" id="MF_01326_B">
    <property type="entry name" value="Ribosomal_uL24_B"/>
    <property type="match status" value="1"/>
</dbReference>
<dbReference type="InterPro" id="IPR005824">
    <property type="entry name" value="KOW"/>
</dbReference>
<dbReference type="InterPro" id="IPR014722">
    <property type="entry name" value="Rib_uL2_dom2"/>
</dbReference>
<dbReference type="InterPro" id="IPR003256">
    <property type="entry name" value="Ribosomal_uL24"/>
</dbReference>
<dbReference type="InterPro" id="IPR041988">
    <property type="entry name" value="Ribosomal_uL24_KOW"/>
</dbReference>
<dbReference type="InterPro" id="IPR008991">
    <property type="entry name" value="Translation_prot_SH3-like_sf"/>
</dbReference>
<dbReference type="NCBIfam" id="TIGR01079">
    <property type="entry name" value="rplX_bact"/>
    <property type="match status" value="1"/>
</dbReference>
<dbReference type="PANTHER" id="PTHR12903">
    <property type="entry name" value="MITOCHONDRIAL RIBOSOMAL PROTEIN L24"/>
    <property type="match status" value="1"/>
</dbReference>
<dbReference type="Pfam" id="PF00467">
    <property type="entry name" value="KOW"/>
    <property type="match status" value="1"/>
</dbReference>
<dbReference type="Pfam" id="PF17136">
    <property type="entry name" value="ribosomal_L24"/>
    <property type="match status" value="1"/>
</dbReference>
<dbReference type="SUPFAM" id="SSF50104">
    <property type="entry name" value="Translation proteins SH3-like domain"/>
    <property type="match status" value="1"/>
</dbReference>
<organism>
    <name type="scientific">Herminiimonas arsenicoxydans</name>
    <dbReference type="NCBI Taxonomy" id="204773"/>
    <lineage>
        <taxon>Bacteria</taxon>
        <taxon>Pseudomonadati</taxon>
        <taxon>Pseudomonadota</taxon>
        <taxon>Betaproteobacteria</taxon>
        <taxon>Burkholderiales</taxon>
        <taxon>Oxalobacteraceae</taxon>
        <taxon>Herminiimonas</taxon>
    </lineage>
</organism>
<gene>
    <name evidence="1" type="primary">rplX</name>
    <name type="ordered locus">HEAR3155</name>
</gene>
<proteinExistence type="inferred from homology"/>
<sequence>MDKIRKSDEVIVLTGKDKGKRGVVQRRVDANYLVVEGVNVAKKATKPNPMTGATGGIVDKLMPIHVSNVALFNAATGKADRAGFKDVDGKKVRVYKSSGEAVKV</sequence>
<reference key="1">
    <citation type="journal article" date="2007" name="PLoS Genet.">
        <title>A tale of two oxidation states: bacterial colonization of arsenic-rich environments.</title>
        <authorList>
            <person name="Muller D."/>
            <person name="Medigue C."/>
            <person name="Koechler S."/>
            <person name="Barbe V."/>
            <person name="Barakat M."/>
            <person name="Talla E."/>
            <person name="Bonnefoy V."/>
            <person name="Krin E."/>
            <person name="Arsene-Ploetze F."/>
            <person name="Carapito C."/>
            <person name="Chandler M."/>
            <person name="Cournoyer B."/>
            <person name="Cruveiller S."/>
            <person name="Dossat C."/>
            <person name="Duval S."/>
            <person name="Heymann M."/>
            <person name="Leize E."/>
            <person name="Lieutaud A."/>
            <person name="Lievremont D."/>
            <person name="Makita Y."/>
            <person name="Mangenot S."/>
            <person name="Nitschke W."/>
            <person name="Ortet P."/>
            <person name="Perdrial N."/>
            <person name="Schoepp B."/>
            <person name="Siguier P."/>
            <person name="Simeonova D.D."/>
            <person name="Rouy Z."/>
            <person name="Segurens B."/>
            <person name="Turlin E."/>
            <person name="Vallenet D."/>
            <person name="van Dorsselaer A."/>
            <person name="Weiss S."/>
            <person name="Weissenbach J."/>
            <person name="Lett M.-C."/>
            <person name="Danchin A."/>
            <person name="Bertin P.N."/>
        </authorList>
    </citation>
    <scope>NUCLEOTIDE SEQUENCE [LARGE SCALE GENOMIC DNA]</scope>
    <source>
        <strain>ULPAs1</strain>
    </source>
</reference>
<accession>A4G9S7</accession>
<evidence type="ECO:0000255" key="1">
    <source>
        <dbReference type="HAMAP-Rule" id="MF_01326"/>
    </source>
</evidence>
<evidence type="ECO:0000305" key="2"/>